<dbReference type="EC" id="3.6.5.n1" evidence="1"/>
<dbReference type="EMBL" id="AP009324">
    <property type="protein sequence ID" value="BAF78455.1"/>
    <property type="molecule type" value="Genomic_DNA"/>
</dbReference>
<dbReference type="RefSeq" id="WP_000368338.1">
    <property type="nucleotide sequence ID" value="NC_009782.1"/>
</dbReference>
<dbReference type="SMR" id="A7X2Y7"/>
<dbReference type="KEGG" id="saw:SAHV_1572"/>
<dbReference type="HOGENOM" id="CLU_009995_3_3_9"/>
<dbReference type="GO" id="GO:0005886">
    <property type="term" value="C:plasma membrane"/>
    <property type="evidence" value="ECO:0007669"/>
    <property type="project" value="UniProtKB-SubCell"/>
</dbReference>
<dbReference type="GO" id="GO:0005525">
    <property type="term" value="F:GTP binding"/>
    <property type="evidence" value="ECO:0007669"/>
    <property type="project" value="UniProtKB-UniRule"/>
</dbReference>
<dbReference type="GO" id="GO:0003924">
    <property type="term" value="F:GTPase activity"/>
    <property type="evidence" value="ECO:0007669"/>
    <property type="project" value="UniProtKB-UniRule"/>
</dbReference>
<dbReference type="GO" id="GO:0043022">
    <property type="term" value="F:ribosome binding"/>
    <property type="evidence" value="ECO:0007669"/>
    <property type="project" value="UniProtKB-UniRule"/>
</dbReference>
<dbReference type="GO" id="GO:0003746">
    <property type="term" value="F:translation elongation factor activity"/>
    <property type="evidence" value="ECO:0007669"/>
    <property type="project" value="UniProtKB-UniRule"/>
</dbReference>
<dbReference type="GO" id="GO:0045727">
    <property type="term" value="P:positive regulation of translation"/>
    <property type="evidence" value="ECO:0007669"/>
    <property type="project" value="UniProtKB-UniRule"/>
</dbReference>
<dbReference type="CDD" id="cd03699">
    <property type="entry name" value="EF4_II"/>
    <property type="match status" value="1"/>
</dbReference>
<dbReference type="CDD" id="cd16260">
    <property type="entry name" value="EF4_III"/>
    <property type="match status" value="1"/>
</dbReference>
<dbReference type="CDD" id="cd01890">
    <property type="entry name" value="LepA"/>
    <property type="match status" value="1"/>
</dbReference>
<dbReference type="CDD" id="cd03709">
    <property type="entry name" value="lepA_C"/>
    <property type="match status" value="1"/>
</dbReference>
<dbReference type="FunFam" id="3.40.50.300:FF:000078">
    <property type="entry name" value="Elongation factor 4"/>
    <property type="match status" value="1"/>
</dbReference>
<dbReference type="FunFam" id="2.40.30.10:FF:000015">
    <property type="entry name" value="Translation factor GUF1, mitochondrial"/>
    <property type="match status" value="1"/>
</dbReference>
<dbReference type="FunFam" id="3.30.70.240:FF:000007">
    <property type="entry name" value="Translation factor GUF1, mitochondrial"/>
    <property type="match status" value="1"/>
</dbReference>
<dbReference type="FunFam" id="3.30.70.2570:FF:000001">
    <property type="entry name" value="Translation factor GUF1, mitochondrial"/>
    <property type="match status" value="1"/>
</dbReference>
<dbReference type="FunFam" id="3.30.70.870:FF:000004">
    <property type="entry name" value="Translation factor GUF1, mitochondrial"/>
    <property type="match status" value="1"/>
</dbReference>
<dbReference type="Gene3D" id="3.30.70.240">
    <property type="match status" value="1"/>
</dbReference>
<dbReference type="Gene3D" id="3.30.70.2570">
    <property type="entry name" value="Elongation factor 4, C-terminal domain"/>
    <property type="match status" value="1"/>
</dbReference>
<dbReference type="Gene3D" id="3.30.70.870">
    <property type="entry name" value="Elongation Factor G (Translational Gtpase), domain 3"/>
    <property type="match status" value="1"/>
</dbReference>
<dbReference type="Gene3D" id="3.40.50.300">
    <property type="entry name" value="P-loop containing nucleotide triphosphate hydrolases"/>
    <property type="match status" value="1"/>
</dbReference>
<dbReference type="Gene3D" id="2.40.30.10">
    <property type="entry name" value="Translation factors"/>
    <property type="match status" value="1"/>
</dbReference>
<dbReference type="HAMAP" id="MF_00071">
    <property type="entry name" value="LepA"/>
    <property type="match status" value="1"/>
</dbReference>
<dbReference type="InterPro" id="IPR006297">
    <property type="entry name" value="EF-4"/>
</dbReference>
<dbReference type="InterPro" id="IPR035647">
    <property type="entry name" value="EFG_III/V"/>
</dbReference>
<dbReference type="InterPro" id="IPR000640">
    <property type="entry name" value="EFG_V-like"/>
</dbReference>
<dbReference type="InterPro" id="IPR004161">
    <property type="entry name" value="EFTu-like_2"/>
</dbReference>
<dbReference type="InterPro" id="IPR031157">
    <property type="entry name" value="G_TR_CS"/>
</dbReference>
<dbReference type="InterPro" id="IPR038363">
    <property type="entry name" value="LepA_C_sf"/>
</dbReference>
<dbReference type="InterPro" id="IPR013842">
    <property type="entry name" value="LepA_CTD"/>
</dbReference>
<dbReference type="InterPro" id="IPR035654">
    <property type="entry name" value="LepA_IV"/>
</dbReference>
<dbReference type="InterPro" id="IPR027417">
    <property type="entry name" value="P-loop_NTPase"/>
</dbReference>
<dbReference type="InterPro" id="IPR005225">
    <property type="entry name" value="Small_GTP-bd"/>
</dbReference>
<dbReference type="InterPro" id="IPR000795">
    <property type="entry name" value="T_Tr_GTP-bd_dom"/>
</dbReference>
<dbReference type="InterPro" id="IPR009000">
    <property type="entry name" value="Transl_B-barrel_sf"/>
</dbReference>
<dbReference type="NCBIfam" id="TIGR01393">
    <property type="entry name" value="lepA"/>
    <property type="match status" value="1"/>
</dbReference>
<dbReference type="NCBIfam" id="TIGR00231">
    <property type="entry name" value="small_GTP"/>
    <property type="match status" value="1"/>
</dbReference>
<dbReference type="PANTHER" id="PTHR43512:SF4">
    <property type="entry name" value="TRANSLATION FACTOR GUF1 HOMOLOG, CHLOROPLASTIC"/>
    <property type="match status" value="1"/>
</dbReference>
<dbReference type="PANTHER" id="PTHR43512">
    <property type="entry name" value="TRANSLATION FACTOR GUF1-RELATED"/>
    <property type="match status" value="1"/>
</dbReference>
<dbReference type="Pfam" id="PF00679">
    <property type="entry name" value="EFG_C"/>
    <property type="match status" value="1"/>
</dbReference>
<dbReference type="Pfam" id="PF00009">
    <property type="entry name" value="GTP_EFTU"/>
    <property type="match status" value="1"/>
</dbReference>
<dbReference type="Pfam" id="PF03144">
    <property type="entry name" value="GTP_EFTU_D2"/>
    <property type="match status" value="1"/>
</dbReference>
<dbReference type="Pfam" id="PF06421">
    <property type="entry name" value="LepA_C"/>
    <property type="match status" value="1"/>
</dbReference>
<dbReference type="PRINTS" id="PR00315">
    <property type="entry name" value="ELONGATNFCT"/>
</dbReference>
<dbReference type="SMART" id="SM00838">
    <property type="entry name" value="EFG_C"/>
    <property type="match status" value="1"/>
</dbReference>
<dbReference type="SUPFAM" id="SSF54980">
    <property type="entry name" value="EF-G C-terminal domain-like"/>
    <property type="match status" value="2"/>
</dbReference>
<dbReference type="SUPFAM" id="SSF52540">
    <property type="entry name" value="P-loop containing nucleoside triphosphate hydrolases"/>
    <property type="match status" value="1"/>
</dbReference>
<dbReference type="SUPFAM" id="SSF50447">
    <property type="entry name" value="Translation proteins"/>
    <property type="match status" value="1"/>
</dbReference>
<dbReference type="PROSITE" id="PS00301">
    <property type="entry name" value="G_TR_1"/>
    <property type="match status" value="1"/>
</dbReference>
<dbReference type="PROSITE" id="PS51722">
    <property type="entry name" value="G_TR_2"/>
    <property type="match status" value="1"/>
</dbReference>
<gene>
    <name evidence="1" type="primary">lepA</name>
    <name type="ordered locus">SAHV_1572</name>
</gene>
<keyword id="KW-1003">Cell membrane</keyword>
<keyword id="KW-0342">GTP-binding</keyword>
<keyword id="KW-0378">Hydrolase</keyword>
<keyword id="KW-0472">Membrane</keyword>
<keyword id="KW-0547">Nucleotide-binding</keyword>
<keyword id="KW-0648">Protein biosynthesis</keyword>
<name>LEPA_STAA1</name>
<protein>
    <recommendedName>
        <fullName evidence="1">Elongation factor 4</fullName>
        <shortName evidence="1">EF-4</shortName>
        <ecNumber evidence="1">3.6.5.n1</ecNumber>
    </recommendedName>
    <alternativeName>
        <fullName evidence="1">Ribosomal back-translocase LepA</fullName>
    </alternativeName>
</protein>
<evidence type="ECO:0000255" key="1">
    <source>
        <dbReference type="HAMAP-Rule" id="MF_00071"/>
    </source>
</evidence>
<reference key="1">
    <citation type="journal article" date="2008" name="Antimicrob. Agents Chemother.">
        <title>Mutated response regulator graR is responsible for phenotypic conversion of Staphylococcus aureus from heterogeneous vancomycin-intermediate resistance to vancomycin-intermediate resistance.</title>
        <authorList>
            <person name="Neoh H.-M."/>
            <person name="Cui L."/>
            <person name="Yuzawa H."/>
            <person name="Takeuchi F."/>
            <person name="Matsuo M."/>
            <person name="Hiramatsu K."/>
        </authorList>
    </citation>
    <scope>NUCLEOTIDE SEQUENCE [LARGE SCALE GENOMIC DNA]</scope>
    <source>
        <strain>Mu3 / ATCC 700698</strain>
    </source>
</reference>
<comment type="function">
    <text evidence="1">Required for accurate and efficient protein synthesis under certain stress conditions. May act as a fidelity factor of the translation reaction, by catalyzing a one-codon backward translocation of tRNAs on improperly translocated ribosomes. Back-translocation proceeds from a post-translocation (POST) complex to a pre-translocation (PRE) complex, thus giving elongation factor G a second chance to translocate the tRNAs correctly. Binds to ribosomes in a GTP-dependent manner.</text>
</comment>
<comment type="catalytic activity">
    <reaction evidence="1">
        <text>GTP + H2O = GDP + phosphate + H(+)</text>
        <dbReference type="Rhea" id="RHEA:19669"/>
        <dbReference type="ChEBI" id="CHEBI:15377"/>
        <dbReference type="ChEBI" id="CHEBI:15378"/>
        <dbReference type="ChEBI" id="CHEBI:37565"/>
        <dbReference type="ChEBI" id="CHEBI:43474"/>
        <dbReference type="ChEBI" id="CHEBI:58189"/>
        <dbReference type="EC" id="3.6.5.n1"/>
    </reaction>
</comment>
<comment type="subcellular location">
    <subcellularLocation>
        <location evidence="1">Cell membrane</location>
        <topology evidence="1">Peripheral membrane protein</topology>
        <orientation evidence="1">Cytoplasmic side</orientation>
    </subcellularLocation>
</comment>
<comment type="similarity">
    <text evidence="1">Belongs to the TRAFAC class translation factor GTPase superfamily. Classic translation factor GTPase family. LepA subfamily.</text>
</comment>
<proteinExistence type="inferred from homology"/>
<organism>
    <name type="scientific">Staphylococcus aureus (strain Mu3 / ATCC 700698)</name>
    <dbReference type="NCBI Taxonomy" id="418127"/>
    <lineage>
        <taxon>Bacteria</taxon>
        <taxon>Bacillati</taxon>
        <taxon>Bacillota</taxon>
        <taxon>Bacilli</taxon>
        <taxon>Bacillales</taxon>
        <taxon>Staphylococcaceae</taxon>
        <taxon>Staphylococcus</taxon>
    </lineage>
</organism>
<sequence length="607" mass="68189">MDNEQRLKRRENIRNFSIIAHIDHGKSTLADRILENTKSVETRDMQDQLLDSMDLERERGITIKLNAVRLKYEAKDGNTYTFHLIDTPGHVDFTYEVSRSLAACEGAILVVDAAQGIEAQTLANVYLALDNELELLPVINKIDLPAAEPERVKQEIEDMIGLDQDDVVLASAKSNIGIEEILEKIVEVVPAPDGDPEAPLKALIFDSEYDPYRGVISSIRIVDGVVKAGDKIRMMATGKEFEVTEVGINTPKQLPVDELTVGDVGYIIASIKNVDDSRVGDTITLASRPASEPLQGYKKMNPMVYCGLFPIDNKNYNDLREALEKLQLNDASLEFEPESSQALGFGYRTGFLGMLHMEIIQERIEREFGIELIATAPSVIYQCILRDGSEVTVDNPAQMPDRDKIDKIFEPYVRATMMVPNDYVGAVMELCQRKRGQFINMDYLDDIRVNIVYELPLAEVVFDFFDQLKSNTKGYASFDYEFIENKESNLVKMDILLNGDKVDALSFIVHRDFAYERGKALVEKLKTLIPRQQFEVPVQAAIGQKIVARTNIKSMGKNVLAKCYGGDISRKRKLLEKQKAGKAKMKAVGNVEIPQDAFLAVLKMDDE</sequence>
<feature type="chain" id="PRO_1000032059" description="Elongation factor 4">
    <location>
        <begin position="1"/>
        <end position="607"/>
    </location>
</feature>
<feature type="domain" description="tr-type G">
    <location>
        <begin position="11"/>
        <end position="193"/>
    </location>
</feature>
<feature type="binding site" evidence="1">
    <location>
        <begin position="23"/>
        <end position="28"/>
    </location>
    <ligand>
        <name>GTP</name>
        <dbReference type="ChEBI" id="CHEBI:37565"/>
    </ligand>
</feature>
<feature type="binding site" evidence="1">
    <location>
        <begin position="140"/>
        <end position="143"/>
    </location>
    <ligand>
        <name>GTP</name>
        <dbReference type="ChEBI" id="CHEBI:37565"/>
    </ligand>
</feature>
<accession>A7X2Y7</accession>